<reference key="1">
    <citation type="journal article" date="2002" name="Mol. Biol. Cell">
        <title>Characterization of an A-kinase anchoring protein in human ciliary axonemes.</title>
        <authorList>
            <person name="Kultgen P.L."/>
            <person name="Byrd S.K."/>
            <person name="Ostrowski L.E."/>
            <person name="Milgram S.L."/>
        </authorList>
    </citation>
    <scope>NUCLEOTIDE SEQUENCE [MRNA] (ISOFORMS 1; 2 AND 3)</scope>
    <scope>SUBUNIT</scope>
    <scope>TISSUE SPECIFICITY</scope>
    <scope>MUTAGENESIS OF LEU-43 AND VAL-47</scope>
    <source>
        <tissue>Lung epithelium</tissue>
    </source>
</reference>
<reference key="2">
    <citation type="journal article" date="2005" name="Nature">
        <title>The DNA sequence of the human X chromosome.</title>
        <authorList>
            <person name="Ross M.T."/>
            <person name="Grafham D.V."/>
            <person name="Coffey A.J."/>
            <person name="Scherer S."/>
            <person name="McLay K."/>
            <person name="Muzny D."/>
            <person name="Platzer M."/>
            <person name="Howell G.R."/>
            <person name="Burrows C."/>
            <person name="Bird C.P."/>
            <person name="Frankish A."/>
            <person name="Lovell F.L."/>
            <person name="Howe K.L."/>
            <person name="Ashurst J.L."/>
            <person name="Fulton R.S."/>
            <person name="Sudbrak R."/>
            <person name="Wen G."/>
            <person name="Jones M.C."/>
            <person name="Hurles M.E."/>
            <person name="Andrews T.D."/>
            <person name="Scott C.E."/>
            <person name="Searle S."/>
            <person name="Ramser J."/>
            <person name="Whittaker A."/>
            <person name="Deadman R."/>
            <person name="Carter N.P."/>
            <person name="Hunt S.E."/>
            <person name="Chen R."/>
            <person name="Cree A."/>
            <person name="Gunaratne P."/>
            <person name="Havlak P."/>
            <person name="Hodgson A."/>
            <person name="Metzker M.L."/>
            <person name="Richards S."/>
            <person name="Scott G."/>
            <person name="Steffen D."/>
            <person name="Sodergren E."/>
            <person name="Wheeler D.A."/>
            <person name="Worley K.C."/>
            <person name="Ainscough R."/>
            <person name="Ambrose K.D."/>
            <person name="Ansari-Lari M.A."/>
            <person name="Aradhya S."/>
            <person name="Ashwell R.I."/>
            <person name="Babbage A.K."/>
            <person name="Bagguley C.L."/>
            <person name="Ballabio A."/>
            <person name="Banerjee R."/>
            <person name="Barker G.E."/>
            <person name="Barlow K.F."/>
            <person name="Barrett I.P."/>
            <person name="Bates K.N."/>
            <person name="Beare D.M."/>
            <person name="Beasley H."/>
            <person name="Beasley O."/>
            <person name="Beck A."/>
            <person name="Bethel G."/>
            <person name="Blechschmidt K."/>
            <person name="Brady N."/>
            <person name="Bray-Allen S."/>
            <person name="Bridgeman A.M."/>
            <person name="Brown A.J."/>
            <person name="Brown M.J."/>
            <person name="Bonnin D."/>
            <person name="Bruford E.A."/>
            <person name="Buhay C."/>
            <person name="Burch P."/>
            <person name="Burford D."/>
            <person name="Burgess J."/>
            <person name="Burrill W."/>
            <person name="Burton J."/>
            <person name="Bye J.M."/>
            <person name="Carder C."/>
            <person name="Carrel L."/>
            <person name="Chako J."/>
            <person name="Chapman J.C."/>
            <person name="Chavez D."/>
            <person name="Chen E."/>
            <person name="Chen G."/>
            <person name="Chen Y."/>
            <person name="Chen Z."/>
            <person name="Chinault C."/>
            <person name="Ciccodicola A."/>
            <person name="Clark S.Y."/>
            <person name="Clarke G."/>
            <person name="Clee C.M."/>
            <person name="Clegg S."/>
            <person name="Clerc-Blankenburg K."/>
            <person name="Clifford K."/>
            <person name="Cobley V."/>
            <person name="Cole C.G."/>
            <person name="Conquer J.S."/>
            <person name="Corby N."/>
            <person name="Connor R.E."/>
            <person name="David R."/>
            <person name="Davies J."/>
            <person name="Davis C."/>
            <person name="Davis J."/>
            <person name="Delgado O."/>
            <person name="Deshazo D."/>
            <person name="Dhami P."/>
            <person name="Ding Y."/>
            <person name="Dinh H."/>
            <person name="Dodsworth S."/>
            <person name="Draper H."/>
            <person name="Dugan-Rocha S."/>
            <person name="Dunham A."/>
            <person name="Dunn M."/>
            <person name="Durbin K.J."/>
            <person name="Dutta I."/>
            <person name="Eades T."/>
            <person name="Ellwood M."/>
            <person name="Emery-Cohen A."/>
            <person name="Errington H."/>
            <person name="Evans K.L."/>
            <person name="Faulkner L."/>
            <person name="Francis F."/>
            <person name="Frankland J."/>
            <person name="Fraser A.E."/>
            <person name="Galgoczy P."/>
            <person name="Gilbert J."/>
            <person name="Gill R."/>
            <person name="Gloeckner G."/>
            <person name="Gregory S.G."/>
            <person name="Gribble S."/>
            <person name="Griffiths C."/>
            <person name="Grocock R."/>
            <person name="Gu Y."/>
            <person name="Gwilliam R."/>
            <person name="Hamilton C."/>
            <person name="Hart E.A."/>
            <person name="Hawes A."/>
            <person name="Heath P.D."/>
            <person name="Heitmann K."/>
            <person name="Hennig S."/>
            <person name="Hernandez J."/>
            <person name="Hinzmann B."/>
            <person name="Ho S."/>
            <person name="Hoffs M."/>
            <person name="Howden P.J."/>
            <person name="Huckle E.J."/>
            <person name="Hume J."/>
            <person name="Hunt P.J."/>
            <person name="Hunt A.R."/>
            <person name="Isherwood J."/>
            <person name="Jacob L."/>
            <person name="Johnson D."/>
            <person name="Jones S."/>
            <person name="de Jong P.J."/>
            <person name="Joseph S.S."/>
            <person name="Keenan S."/>
            <person name="Kelly S."/>
            <person name="Kershaw J.K."/>
            <person name="Khan Z."/>
            <person name="Kioschis P."/>
            <person name="Klages S."/>
            <person name="Knights A.J."/>
            <person name="Kosiura A."/>
            <person name="Kovar-Smith C."/>
            <person name="Laird G.K."/>
            <person name="Langford C."/>
            <person name="Lawlor S."/>
            <person name="Leversha M."/>
            <person name="Lewis L."/>
            <person name="Liu W."/>
            <person name="Lloyd C."/>
            <person name="Lloyd D.M."/>
            <person name="Loulseged H."/>
            <person name="Loveland J.E."/>
            <person name="Lovell J.D."/>
            <person name="Lozado R."/>
            <person name="Lu J."/>
            <person name="Lyne R."/>
            <person name="Ma J."/>
            <person name="Maheshwari M."/>
            <person name="Matthews L.H."/>
            <person name="McDowall J."/>
            <person name="McLaren S."/>
            <person name="McMurray A."/>
            <person name="Meidl P."/>
            <person name="Meitinger T."/>
            <person name="Milne S."/>
            <person name="Miner G."/>
            <person name="Mistry S.L."/>
            <person name="Morgan M."/>
            <person name="Morris S."/>
            <person name="Mueller I."/>
            <person name="Mullikin J.C."/>
            <person name="Nguyen N."/>
            <person name="Nordsiek G."/>
            <person name="Nyakatura G."/>
            <person name="O'dell C.N."/>
            <person name="Okwuonu G."/>
            <person name="Palmer S."/>
            <person name="Pandian R."/>
            <person name="Parker D."/>
            <person name="Parrish J."/>
            <person name="Pasternak S."/>
            <person name="Patel D."/>
            <person name="Pearce A.V."/>
            <person name="Pearson D.M."/>
            <person name="Pelan S.E."/>
            <person name="Perez L."/>
            <person name="Porter K.M."/>
            <person name="Ramsey Y."/>
            <person name="Reichwald K."/>
            <person name="Rhodes S."/>
            <person name="Ridler K.A."/>
            <person name="Schlessinger D."/>
            <person name="Schueler M.G."/>
            <person name="Sehra H.K."/>
            <person name="Shaw-Smith C."/>
            <person name="Shen H."/>
            <person name="Sheridan E.M."/>
            <person name="Shownkeen R."/>
            <person name="Skuce C.D."/>
            <person name="Smith M.L."/>
            <person name="Sotheran E.C."/>
            <person name="Steingruber H.E."/>
            <person name="Steward C.A."/>
            <person name="Storey R."/>
            <person name="Swann R.M."/>
            <person name="Swarbreck D."/>
            <person name="Tabor P.E."/>
            <person name="Taudien S."/>
            <person name="Taylor T."/>
            <person name="Teague B."/>
            <person name="Thomas K."/>
            <person name="Thorpe A."/>
            <person name="Timms K."/>
            <person name="Tracey A."/>
            <person name="Trevanion S."/>
            <person name="Tromans A.C."/>
            <person name="d'Urso M."/>
            <person name="Verduzco D."/>
            <person name="Villasana D."/>
            <person name="Waldron L."/>
            <person name="Wall M."/>
            <person name="Wang Q."/>
            <person name="Warren J."/>
            <person name="Warry G.L."/>
            <person name="Wei X."/>
            <person name="West A."/>
            <person name="Whitehead S.L."/>
            <person name="Whiteley M.N."/>
            <person name="Wilkinson J.E."/>
            <person name="Willey D.L."/>
            <person name="Williams G."/>
            <person name="Williams L."/>
            <person name="Williamson A."/>
            <person name="Williamson H."/>
            <person name="Wilming L."/>
            <person name="Woodmansey R.L."/>
            <person name="Wray P.W."/>
            <person name="Yen J."/>
            <person name="Zhang J."/>
            <person name="Zhou J."/>
            <person name="Zoghbi H."/>
            <person name="Zorilla S."/>
            <person name="Buck D."/>
            <person name="Reinhardt R."/>
            <person name="Poustka A."/>
            <person name="Rosenthal A."/>
            <person name="Lehrach H."/>
            <person name="Meindl A."/>
            <person name="Minx P.J."/>
            <person name="Hillier L.W."/>
            <person name="Willard H.F."/>
            <person name="Wilson R.K."/>
            <person name="Waterston R.H."/>
            <person name="Rice C.M."/>
            <person name="Vaudin M."/>
            <person name="Coulson A."/>
            <person name="Nelson D.L."/>
            <person name="Weinstock G."/>
            <person name="Sulston J.E."/>
            <person name="Durbin R.M."/>
            <person name="Hubbard T."/>
            <person name="Gibbs R.A."/>
            <person name="Beck S."/>
            <person name="Rogers J."/>
            <person name="Bentley D.R."/>
        </authorList>
    </citation>
    <scope>NUCLEOTIDE SEQUENCE [LARGE SCALE GENOMIC DNA]</scope>
</reference>
<reference key="3">
    <citation type="journal article" date="2004" name="Genome Res.">
        <title>The status, quality, and expansion of the NIH full-length cDNA project: the Mammalian Gene Collection (MGC).</title>
        <authorList>
            <consortium name="The MGC Project Team"/>
        </authorList>
    </citation>
    <scope>NUCLEOTIDE SEQUENCE [LARGE SCALE MRNA] (ISOFORM 1)</scope>
    <source>
        <tissue>Testis</tissue>
    </source>
</reference>
<feature type="chain" id="PRO_0000064521" description="A-kinase anchor protein 14">
    <location>
        <begin position="1"/>
        <end position="197"/>
    </location>
</feature>
<feature type="region of interest" description="Disordered" evidence="1">
    <location>
        <begin position="1"/>
        <end position="29"/>
    </location>
</feature>
<feature type="region of interest" description="RII-binding">
    <location>
        <begin position="35"/>
        <end position="52"/>
    </location>
</feature>
<feature type="compositionally biased region" description="Polar residues" evidence="1">
    <location>
        <begin position="1"/>
        <end position="11"/>
    </location>
</feature>
<feature type="compositionally biased region" description="Polar residues" evidence="1">
    <location>
        <begin position="19"/>
        <end position="29"/>
    </location>
</feature>
<feature type="splice variant" id="VSP_009909" description="In isoform 2." evidence="3">
    <location>
        <begin position="88"/>
        <end position="147"/>
    </location>
</feature>
<feature type="splice variant" id="VSP_009910" description="In isoform 3." evidence="3">
    <original>KC</original>
    <variation>VS</variation>
    <location>
        <begin position="88"/>
        <end position="89"/>
    </location>
</feature>
<feature type="splice variant" id="VSP_009911" description="In isoform 3." evidence="3">
    <location>
        <begin position="90"/>
        <end position="197"/>
    </location>
</feature>
<feature type="mutagenesis site" description="Abolishes RII-binding; when associated with P-47." evidence="2">
    <original>L</original>
    <variation>P</variation>
    <location>
        <position position="43"/>
    </location>
</feature>
<feature type="mutagenesis site" description="Abolishes RII-binding; when associated with P-43." evidence="2">
    <original>V</original>
    <variation>P</variation>
    <location>
        <position position="47"/>
    </location>
</feature>
<feature type="sequence conflict" description="In Ref. 1; AAP20826." evidence="4" ref="1">
    <original>S</original>
    <variation>SP</variation>
    <location sequence="Q86UN6-2">
        <position position="87"/>
    </location>
</feature>
<protein>
    <recommendedName>
        <fullName>A-kinase anchor protein 14</fullName>
        <shortName>AKAP-14</shortName>
    </recommendedName>
    <alternativeName>
        <fullName>A-kinase anchor protein 28 kDa</fullName>
        <shortName>AKAP 28</shortName>
    </alternativeName>
    <alternativeName>
        <fullName>Protein kinase A-anchoring protein 14</fullName>
        <shortName>PRKA14</shortName>
    </alternativeName>
</protein>
<gene>
    <name type="primary">AKAP14</name>
    <name type="synonym">AKAP28</name>
</gene>
<accession>Q86UN6</accession>
<accession>A6NNZ0</accession>
<accession>Q86UN4</accession>
<accession>Q86UN5</accession>
<sequence>MSETQNSTSQKAMDEDNKAASQTMPNTQDKNYEDELTQVALALVEDVINYAVKIVEEERNPLKNIKWMTHGEFTVEKGLKQIDEYFSKCVSKKCWAHGVEFVERKDLIHSFLYIYYVHWSISTADLPVARISAGTYFTMKVSKTKPPDAPIVVSYVGDHQALVHRPGMVRFRENWQKNLTDAKYSFMESFPFLFNRV</sequence>
<evidence type="ECO:0000256" key="1">
    <source>
        <dbReference type="SAM" id="MobiDB-lite"/>
    </source>
</evidence>
<evidence type="ECO:0000269" key="2">
    <source>
    </source>
</evidence>
<evidence type="ECO:0000303" key="3">
    <source>
    </source>
</evidence>
<evidence type="ECO:0000305" key="4"/>
<proteinExistence type="evidence at protein level"/>
<name>AKA28_HUMAN</name>
<organism>
    <name type="scientific">Homo sapiens</name>
    <name type="common">Human</name>
    <dbReference type="NCBI Taxonomy" id="9606"/>
    <lineage>
        <taxon>Eukaryota</taxon>
        <taxon>Metazoa</taxon>
        <taxon>Chordata</taxon>
        <taxon>Craniata</taxon>
        <taxon>Vertebrata</taxon>
        <taxon>Euteleostomi</taxon>
        <taxon>Mammalia</taxon>
        <taxon>Eutheria</taxon>
        <taxon>Euarchontoglires</taxon>
        <taxon>Primates</taxon>
        <taxon>Haplorrhini</taxon>
        <taxon>Catarrhini</taxon>
        <taxon>Hominidae</taxon>
        <taxon>Homo</taxon>
    </lineage>
</organism>
<keyword id="KW-0025">Alternative splicing</keyword>
<keyword id="KW-0963">Cytoplasm</keyword>
<keyword id="KW-1267">Proteomics identification</keyword>
<keyword id="KW-1185">Reference proteome</keyword>
<dbReference type="EMBL" id="AF514780">
    <property type="protein sequence ID" value="AAP20825.1"/>
    <property type="molecule type" value="mRNA"/>
</dbReference>
<dbReference type="EMBL" id="AF514781">
    <property type="protein sequence ID" value="AAP20826.1"/>
    <property type="molecule type" value="mRNA"/>
</dbReference>
<dbReference type="EMBL" id="AF514782">
    <property type="protein sequence ID" value="AAP20827.1"/>
    <property type="molecule type" value="mRNA"/>
</dbReference>
<dbReference type="EMBL" id="AC002477">
    <property type="status" value="NOT_ANNOTATED_CDS"/>
    <property type="molecule type" value="Genomic_DNA"/>
</dbReference>
<dbReference type="EMBL" id="BC066357">
    <property type="protein sequence ID" value="AAH66357.1"/>
    <property type="molecule type" value="mRNA"/>
</dbReference>
<dbReference type="CCDS" id="CCDS14591.1">
    <molecule id="Q86UN6-1"/>
</dbReference>
<dbReference type="CCDS" id="CCDS35376.1">
    <molecule id="Q86UN6-2"/>
</dbReference>
<dbReference type="CCDS" id="CCDS35377.1">
    <molecule id="Q86UN6-3"/>
</dbReference>
<dbReference type="RefSeq" id="NP_001008534.1">
    <molecule id="Q86UN6-2"/>
    <property type="nucleotide sequence ID" value="NM_001008534.2"/>
</dbReference>
<dbReference type="RefSeq" id="NP_001008535.1">
    <molecule id="Q86UN6-3"/>
    <property type="nucleotide sequence ID" value="NM_001008535.2"/>
</dbReference>
<dbReference type="RefSeq" id="NP_848928.1">
    <molecule id="Q86UN6-1"/>
    <property type="nucleotide sequence ID" value="NM_178813.6"/>
</dbReference>
<dbReference type="SMR" id="Q86UN6"/>
<dbReference type="BioGRID" id="127707">
    <property type="interactions" value="18"/>
</dbReference>
<dbReference type="FunCoup" id="Q86UN6">
    <property type="interactions" value="6"/>
</dbReference>
<dbReference type="IntAct" id="Q86UN6">
    <property type="interactions" value="16"/>
</dbReference>
<dbReference type="STRING" id="9606.ENSP00000360485"/>
<dbReference type="GlyGen" id="Q86UN6">
    <property type="glycosylation" value="1 site, 1 O-linked glycan (1 site)"/>
</dbReference>
<dbReference type="iPTMnet" id="Q86UN6"/>
<dbReference type="PhosphoSitePlus" id="Q86UN6"/>
<dbReference type="BioMuta" id="AKAP14"/>
<dbReference type="DMDM" id="46395790"/>
<dbReference type="MassIVE" id="Q86UN6"/>
<dbReference type="PaxDb" id="9606-ENSP00000360485"/>
<dbReference type="PeptideAtlas" id="Q86UN6"/>
<dbReference type="ProteomicsDB" id="1648"/>
<dbReference type="ProteomicsDB" id="69835">
    <molecule id="Q86UN6-1"/>
</dbReference>
<dbReference type="ProteomicsDB" id="69836">
    <molecule id="Q86UN6-2"/>
</dbReference>
<dbReference type="ProteomicsDB" id="69837">
    <molecule id="Q86UN6-3"/>
</dbReference>
<dbReference type="Antibodypedia" id="44608">
    <property type="antibodies" value="109 antibodies from 27 providers"/>
</dbReference>
<dbReference type="DNASU" id="158798"/>
<dbReference type="Ensembl" id="ENST00000334356.2">
    <molecule id="Q86UN6-2"/>
    <property type="protein sequence ID" value="ENSP00000334680.2"/>
    <property type="gene ID" value="ENSG00000186471.13"/>
</dbReference>
<dbReference type="Ensembl" id="ENST00000371422.5">
    <molecule id="Q86UN6-3"/>
    <property type="protein sequence ID" value="ENSP00000360476.1"/>
    <property type="gene ID" value="ENSG00000186471.13"/>
</dbReference>
<dbReference type="Ensembl" id="ENST00000371425.8">
    <molecule id="Q86UN6-2"/>
    <property type="protein sequence ID" value="ENSP00000360479.4"/>
    <property type="gene ID" value="ENSG00000186471.13"/>
</dbReference>
<dbReference type="Ensembl" id="ENST00000371431.8">
    <molecule id="Q86UN6-1"/>
    <property type="protein sequence ID" value="ENSP00000360485.3"/>
    <property type="gene ID" value="ENSG00000186471.13"/>
</dbReference>
<dbReference type="GeneID" id="158798"/>
<dbReference type="KEGG" id="hsa:158798"/>
<dbReference type="MANE-Select" id="ENST00000371431.8">
    <property type="protein sequence ID" value="ENSP00000360485.3"/>
    <property type="RefSeq nucleotide sequence ID" value="NM_178813.6"/>
    <property type="RefSeq protein sequence ID" value="NP_848928.1"/>
</dbReference>
<dbReference type="UCSC" id="uc004ese.4">
    <molecule id="Q86UN6-1"/>
    <property type="organism name" value="human"/>
</dbReference>
<dbReference type="AGR" id="HGNC:24061"/>
<dbReference type="CTD" id="158798"/>
<dbReference type="GeneCards" id="AKAP14"/>
<dbReference type="HGNC" id="HGNC:24061">
    <property type="gene designation" value="AKAP14"/>
</dbReference>
<dbReference type="HPA" id="ENSG00000186471">
    <property type="expression patterns" value="Group enriched (choroid plexus, fallopian tube, testis)"/>
</dbReference>
<dbReference type="MIM" id="300462">
    <property type="type" value="gene"/>
</dbReference>
<dbReference type="neXtProt" id="NX_Q86UN6"/>
<dbReference type="OpenTargets" id="ENSG00000186471"/>
<dbReference type="PharmGKB" id="PA134914893"/>
<dbReference type="VEuPathDB" id="HostDB:ENSG00000186471"/>
<dbReference type="eggNOG" id="ENOG502S0CR">
    <property type="taxonomic scope" value="Eukaryota"/>
</dbReference>
<dbReference type="GeneTree" id="ENSGT00390000003444"/>
<dbReference type="HOGENOM" id="CLU_116552_0_0_1"/>
<dbReference type="InParanoid" id="Q86UN6"/>
<dbReference type="OMA" id="FHYIYCV"/>
<dbReference type="OrthoDB" id="2148342at2759"/>
<dbReference type="PAN-GO" id="Q86UN6">
    <property type="GO annotations" value="2 GO annotations based on evolutionary models"/>
</dbReference>
<dbReference type="PhylomeDB" id="Q86UN6"/>
<dbReference type="TreeFam" id="TF329057"/>
<dbReference type="PathwayCommons" id="Q86UN6"/>
<dbReference type="SignaLink" id="Q86UN6"/>
<dbReference type="BioGRID-ORCS" id="158798">
    <property type="hits" value="9 hits in 772 CRISPR screens"/>
</dbReference>
<dbReference type="ChiTaRS" id="AKAP14">
    <property type="organism name" value="human"/>
</dbReference>
<dbReference type="GenomeRNAi" id="158798"/>
<dbReference type="Pharos" id="Q86UN6">
    <property type="development level" value="Tbio"/>
</dbReference>
<dbReference type="PRO" id="PR:Q86UN6"/>
<dbReference type="Proteomes" id="UP000005640">
    <property type="component" value="Chromosome X"/>
</dbReference>
<dbReference type="RNAct" id="Q86UN6">
    <property type="molecule type" value="protein"/>
</dbReference>
<dbReference type="Bgee" id="ENSG00000186471">
    <property type="expression patterns" value="Expressed in bronchial epithelial cell and 116 other cell types or tissues"/>
</dbReference>
<dbReference type="GO" id="GO:0005930">
    <property type="term" value="C:axoneme"/>
    <property type="evidence" value="ECO:0000314"/>
    <property type="project" value="UniProtKB"/>
</dbReference>
<dbReference type="GO" id="GO:0005952">
    <property type="term" value="C:cAMP-dependent protein kinase complex"/>
    <property type="evidence" value="ECO:0000315"/>
    <property type="project" value="UniProtKB"/>
</dbReference>
<dbReference type="GO" id="GO:0034237">
    <property type="term" value="F:protein kinase A regulatory subunit binding"/>
    <property type="evidence" value="ECO:0000353"/>
    <property type="project" value="UniProtKB"/>
</dbReference>
<dbReference type="InterPro" id="IPR053084">
    <property type="entry name" value="AKAP"/>
</dbReference>
<dbReference type="InterPro" id="IPR025663">
    <property type="entry name" value="AKAP_28"/>
</dbReference>
<dbReference type="PANTHER" id="PTHR35075">
    <property type="entry name" value="A-KINASE ANCHOR PROTEIN 14"/>
    <property type="match status" value="1"/>
</dbReference>
<dbReference type="PANTHER" id="PTHR35075:SF1">
    <property type="entry name" value="A-KINASE ANCHOR PROTEIN 14"/>
    <property type="match status" value="1"/>
</dbReference>
<dbReference type="Pfam" id="PF14469">
    <property type="entry name" value="AKAP28"/>
    <property type="match status" value="1"/>
</dbReference>
<comment type="function">
    <text>Binds to type II regulatory subunits of protein kinase A and anchors/targets them.</text>
</comment>
<comment type="subunit">
    <text evidence="2">Binds to type II regulatory subunits (RII).</text>
</comment>
<comment type="interaction">
    <interactant intactId="EBI-2119626">
        <id>Q86UN6</id>
    </interactant>
    <interactant intactId="EBI-744973">
        <id>Q9C005</id>
        <label>DPY30</label>
    </interactant>
    <organismsDiffer>false</organismsDiffer>
    <experiments>3</experiments>
</comment>
<comment type="interaction">
    <interactant intactId="EBI-2119626">
        <id>Q86UN6</id>
    </interactant>
    <interactant intactId="EBI-2805516">
        <id>P31321</id>
        <label>PRKAR1B</label>
    </interactant>
    <organismsDiffer>false</organismsDiffer>
    <experiments>3</experiments>
</comment>
<comment type="interaction">
    <interactant intactId="EBI-2119626">
        <id>Q86UN6</id>
    </interactant>
    <interactant intactId="EBI-11752137">
        <id>P13861-2</id>
        <label>PRKAR2A</label>
    </interactant>
    <organismsDiffer>false</organismsDiffer>
    <experiments>3</experiments>
</comment>
<comment type="interaction">
    <interactant intactId="EBI-2119626">
        <id>Q86UN6</id>
    </interactant>
    <interactant intactId="EBI-2930670">
        <id>P31323</id>
        <label>PRKAR2B</label>
    </interactant>
    <organismsDiffer>false</organismsDiffer>
    <experiments>9</experiments>
</comment>
<comment type="interaction">
    <interactant intactId="EBI-2119626">
        <id>Q86UN6</id>
    </interactant>
    <interactant intactId="EBI-1378139">
        <id>Q9HAT0</id>
        <label>ROPN1</label>
    </interactant>
    <organismsDiffer>false</organismsDiffer>
    <experiments>3</experiments>
</comment>
<comment type="interaction">
    <interactant intactId="EBI-2119626">
        <id>Q86UN6</id>
    </interactant>
    <interactant intactId="EBI-9033237">
        <id>Q96C74</id>
        <label>ROPN1L</label>
    </interactant>
    <organismsDiffer>false</organismsDiffer>
    <experiments>3</experiments>
</comment>
<comment type="subcellular location">
    <subcellularLocation>
        <location evidence="4">Cytoplasm</location>
    </subcellularLocation>
</comment>
<comment type="alternative products">
    <event type="alternative splicing"/>
    <isoform>
        <id>Q86UN6-1</id>
        <name>1</name>
        <name>Isoform A</name>
        <sequence type="displayed"/>
    </isoform>
    <isoform>
        <id>Q86UN6-2</id>
        <name>2</name>
        <name>Isoform B</name>
        <sequence type="described" ref="VSP_009909"/>
    </isoform>
    <isoform>
        <id>Q86UN6-3</id>
        <name>3</name>
        <name>Isoform C</name>
        <sequence type="described" ref="VSP_009910 VSP_009911"/>
    </isoform>
</comment>
<comment type="tissue specificity">
    <text evidence="2">Present in cilia (at protein level). Expressed in tissues containing axoneme-based organelles (cilia and/or flagella): trachea and testis. Highly expressed in airway cilia.</text>
</comment>